<protein>
    <recommendedName>
        <fullName evidence="1">Sulfur carrier protein TusA</fullName>
    </recommendedName>
    <alternativeName>
        <fullName evidence="1">Sulfur mediator TusA</fullName>
    </alternativeName>
    <alternativeName>
        <fullName evidence="1">Sulfur transfer protein TusA</fullName>
    </alternativeName>
    <alternativeName>
        <fullName evidence="1">tRNA 2-thiouridine synthesizing protein A</fullName>
    </alternativeName>
</protein>
<gene>
    <name evidence="1" type="primary">tusA</name>
    <name type="ordered locus">ECA4353</name>
</gene>
<sequence>MTDPFTNPDKTLDAQGLRCPEPVMMVRKTVRQMETGQTLLIIADDPATTRDIPGFCVYMEHELLAQETEQVPYRYLLRKGQ</sequence>
<accession>Q6CZ00</accession>
<evidence type="ECO:0000255" key="1">
    <source>
        <dbReference type="HAMAP-Rule" id="MF_00413"/>
    </source>
</evidence>
<comment type="function">
    <text evidence="1">Sulfur carrier protein involved in sulfur trafficking in the cell. Part of a sulfur-relay system required for 2-thiolation during synthesis of 2-thiouridine of the modified wobble base 5-methylaminomethyl-2-thiouridine (mnm(5)s(2)U) in tRNA. Interacts with IscS and stimulates its cysteine desulfurase activity. Accepts an activated sulfur from IscS, which is then transferred to TusD, and thus determines the direction of sulfur flow from IscS to 2-thiouridine formation. Also appears to be involved in sulfur transfer for the biosynthesis of molybdopterin.</text>
</comment>
<comment type="pathway">
    <text evidence="1">tRNA modification.</text>
</comment>
<comment type="subunit">
    <text evidence="1">Interacts with IscS.</text>
</comment>
<comment type="subcellular location">
    <subcellularLocation>
        <location evidence="1">Cytoplasm</location>
    </subcellularLocation>
</comment>
<comment type="similarity">
    <text evidence="1">Belongs to the sulfur carrier protein TusA family.</text>
</comment>
<proteinExistence type="inferred from homology"/>
<reference key="1">
    <citation type="journal article" date="2004" name="Proc. Natl. Acad. Sci. U.S.A.">
        <title>Genome sequence of the enterobacterial phytopathogen Erwinia carotovora subsp. atroseptica and characterization of virulence factors.</title>
        <authorList>
            <person name="Bell K.S."/>
            <person name="Sebaihia M."/>
            <person name="Pritchard L."/>
            <person name="Holden M.T.G."/>
            <person name="Hyman L.J."/>
            <person name="Holeva M.C."/>
            <person name="Thomson N.R."/>
            <person name="Bentley S.D."/>
            <person name="Churcher L.J.C."/>
            <person name="Mungall K."/>
            <person name="Atkin R."/>
            <person name="Bason N."/>
            <person name="Brooks K."/>
            <person name="Chillingworth T."/>
            <person name="Clark K."/>
            <person name="Doggett J."/>
            <person name="Fraser A."/>
            <person name="Hance Z."/>
            <person name="Hauser H."/>
            <person name="Jagels K."/>
            <person name="Moule S."/>
            <person name="Norbertczak H."/>
            <person name="Ormond D."/>
            <person name="Price C."/>
            <person name="Quail M.A."/>
            <person name="Sanders M."/>
            <person name="Walker D."/>
            <person name="Whitehead S."/>
            <person name="Salmond G.P.C."/>
            <person name="Birch P.R.J."/>
            <person name="Parkhill J."/>
            <person name="Toth I.K."/>
        </authorList>
    </citation>
    <scope>NUCLEOTIDE SEQUENCE [LARGE SCALE GENOMIC DNA]</scope>
    <source>
        <strain>SCRI 1043 / ATCC BAA-672</strain>
    </source>
</reference>
<organism>
    <name type="scientific">Pectobacterium atrosepticum (strain SCRI 1043 / ATCC BAA-672)</name>
    <name type="common">Erwinia carotovora subsp. atroseptica</name>
    <dbReference type="NCBI Taxonomy" id="218491"/>
    <lineage>
        <taxon>Bacteria</taxon>
        <taxon>Pseudomonadati</taxon>
        <taxon>Pseudomonadota</taxon>
        <taxon>Gammaproteobacteria</taxon>
        <taxon>Enterobacterales</taxon>
        <taxon>Pectobacteriaceae</taxon>
        <taxon>Pectobacterium</taxon>
    </lineage>
</organism>
<feature type="chain" id="PRO_0000159036" description="Sulfur carrier protein TusA">
    <location>
        <begin position="1"/>
        <end position="81"/>
    </location>
</feature>
<feature type="active site" description="Cysteine persulfide intermediate" evidence="1">
    <location>
        <position position="19"/>
    </location>
</feature>
<dbReference type="EMBL" id="BX950851">
    <property type="protein sequence ID" value="CAG77250.1"/>
    <property type="molecule type" value="Genomic_DNA"/>
</dbReference>
<dbReference type="RefSeq" id="WP_011095816.1">
    <property type="nucleotide sequence ID" value="NC_004547.2"/>
</dbReference>
<dbReference type="SMR" id="Q6CZ00"/>
<dbReference type="STRING" id="218491.ECA4353"/>
<dbReference type="KEGG" id="eca:ECA4353"/>
<dbReference type="eggNOG" id="COG0425">
    <property type="taxonomic scope" value="Bacteria"/>
</dbReference>
<dbReference type="HOGENOM" id="CLU_165255_5_0_6"/>
<dbReference type="OrthoDB" id="9797352at2"/>
<dbReference type="Proteomes" id="UP000007966">
    <property type="component" value="Chromosome"/>
</dbReference>
<dbReference type="GO" id="GO:0005737">
    <property type="term" value="C:cytoplasm"/>
    <property type="evidence" value="ECO:0007669"/>
    <property type="project" value="UniProtKB-SubCell"/>
</dbReference>
<dbReference type="GO" id="GO:0097163">
    <property type="term" value="F:sulfur carrier activity"/>
    <property type="evidence" value="ECO:0007669"/>
    <property type="project" value="UniProtKB-UniRule"/>
</dbReference>
<dbReference type="GO" id="GO:0002143">
    <property type="term" value="P:tRNA wobble position uridine thiolation"/>
    <property type="evidence" value="ECO:0007669"/>
    <property type="project" value="InterPro"/>
</dbReference>
<dbReference type="CDD" id="cd03423">
    <property type="entry name" value="SirA"/>
    <property type="match status" value="1"/>
</dbReference>
<dbReference type="Gene3D" id="3.30.110.40">
    <property type="entry name" value="TusA-like domain"/>
    <property type="match status" value="1"/>
</dbReference>
<dbReference type="HAMAP" id="MF_00413">
    <property type="entry name" value="Thiourid_synth_A"/>
    <property type="match status" value="1"/>
</dbReference>
<dbReference type="InterPro" id="IPR022931">
    <property type="entry name" value="Sulphur_carrier_TusA"/>
</dbReference>
<dbReference type="InterPro" id="IPR001455">
    <property type="entry name" value="TusA-like"/>
</dbReference>
<dbReference type="InterPro" id="IPR036868">
    <property type="entry name" value="TusA-like_sf"/>
</dbReference>
<dbReference type="NCBIfam" id="NF001423">
    <property type="entry name" value="PRK00299.1"/>
    <property type="match status" value="1"/>
</dbReference>
<dbReference type="PANTHER" id="PTHR33279:SF2">
    <property type="entry name" value="SULFUR CARRIER PROTEIN TUSA"/>
    <property type="match status" value="1"/>
</dbReference>
<dbReference type="PANTHER" id="PTHR33279">
    <property type="entry name" value="SULFUR CARRIER PROTEIN YEDF-RELATED"/>
    <property type="match status" value="1"/>
</dbReference>
<dbReference type="Pfam" id="PF01206">
    <property type="entry name" value="TusA"/>
    <property type="match status" value="1"/>
</dbReference>
<dbReference type="SUPFAM" id="SSF64307">
    <property type="entry name" value="SirA-like"/>
    <property type="match status" value="1"/>
</dbReference>
<dbReference type="PROSITE" id="PS01148">
    <property type="entry name" value="UPF0033"/>
    <property type="match status" value="1"/>
</dbReference>
<name>TUSA_PECAS</name>
<keyword id="KW-0963">Cytoplasm</keyword>
<keyword id="KW-1185">Reference proteome</keyword>
<keyword id="KW-0819">tRNA processing</keyword>